<keyword id="KW-0968">Cytoplasmic vesicle</keyword>
<keyword id="KW-0967">Endosome</keyword>
<keyword id="KW-0458">Lysosome</keyword>
<keyword id="KW-0472">Membrane</keyword>
<keyword id="KW-0653">Protein transport</keyword>
<keyword id="KW-1185">Reference proteome</keyword>
<keyword id="KW-0813">Transport</keyword>
<proteinExistence type="evidence at protein level"/>
<name>VP33A_RAT</name>
<reference key="1">
    <citation type="journal article" date="1996" name="Gene">
        <title>Mammalian homologues of yeast vacuolar protein sorting (vps) genes implicated in Golgi-to-lysosome trafficking.</title>
        <authorList>
            <person name="Pevsner J."/>
            <person name="Hsu S.-C."/>
            <person name="Hyde P.S."/>
            <person name="Scheller R.H."/>
        </authorList>
    </citation>
    <scope>NUCLEOTIDE SEQUENCE [MRNA]</scope>
    <source>
        <tissue>Brain</tissue>
    </source>
</reference>
<reference key="2">
    <citation type="journal article" date="2001" name="J. Biol. Chem.">
        <title>Molecular characterization of mammalian homologues of class C Vps proteins that interact with syntaxin-7.</title>
        <authorList>
            <person name="Kim B.Y."/>
            <person name="Kraemer H."/>
            <person name="Yamamoto A."/>
            <person name="Kominami E."/>
            <person name="Kohsaka S."/>
            <person name="Akazawa C."/>
        </authorList>
    </citation>
    <scope>CHARACTERIZATION</scope>
    <scope>INTERACTION WITH VPS11 AND VPS18</scope>
    <scope>SUBUNIT</scope>
    <scope>SUBCELLULAR LOCATION</scope>
</reference>
<sequence>MAAHLSYGRVNLNVLREAVRRELREFLDKCAGSKAIVWDEYLTGPFGLIAQYSLLKEHEVEKMFTLKGSRLPAADVKNIIFLVRPRLELMDMIAENVLSEDRRGPTRDFHILFVPRRSLLCEQRLKDLGVLGSFIYREEYSLDLIPFDGDLLSMESESAFKECYLEGDQTSLYHAAKGLMTLQALYGTIPQIFGKGECARQVANMMVRMKREFTGSQNSVFPVFDNLLLLDRNVDLLTPLASQLTYEGLIDEIYGIQNSYVKLPPEKFAPKKQGGGGGKDLPTEAKKLQLNSAEELYAEIRDKNFNAVGSVLSKKAKIISAAFEERHNAKTVGEIKQFVSQLPHMQAARGSLANHTSIAELIKDVTTSEDFFDKLTVEQEFMSGIDTDKVNNYIEDCIAQKHPLIKVLRLVCLQSMCNSGLKQKVLDYYKREILQTYGYEHILTLNNLEKAGLLKAQTGGRNNYPTIRKTLRLWMDDVNEQNPTDISYVYSGYAPLSVRLAQLLSRPGWRSIEEVLRILPGPHFEERQPLPTGVQKKRQPGENRVTLVFFLGGVTFAEIAALRFLSQLEDGGTEYVIATTKLINGSSWLEALMEKPF</sequence>
<organism>
    <name type="scientific">Rattus norvegicus</name>
    <name type="common">Rat</name>
    <dbReference type="NCBI Taxonomy" id="10116"/>
    <lineage>
        <taxon>Eukaryota</taxon>
        <taxon>Metazoa</taxon>
        <taxon>Chordata</taxon>
        <taxon>Craniata</taxon>
        <taxon>Vertebrata</taxon>
        <taxon>Euteleostomi</taxon>
        <taxon>Mammalia</taxon>
        <taxon>Eutheria</taxon>
        <taxon>Euarchontoglires</taxon>
        <taxon>Glires</taxon>
        <taxon>Rodentia</taxon>
        <taxon>Myomorpha</taxon>
        <taxon>Muroidea</taxon>
        <taxon>Muridae</taxon>
        <taxon>Murinae</taxon>
        <taxon>Rattus</taxon>
    </lineage>
</organism>
<accession>Q63615</accession>
<gene>
    <name type="primary">Vps33a</name>
</gene>
<evidence type="ECO:0000250" key="1">
    <source>
        <dbReference type="UniProtKB" id="Q96AX1"/>
    </source>
</evidence>
<evidence type="ECO:0000250" key="2">
    <source>
        <dbReference type="UniProtKB" id="Q9D2N9"/>
    </source>
</evidence>
<evidence type="ECO:0000269" key="3">
    <source>
    </source>
</evidence>
<evidence type="ECO:0000305" key="4"/>
<evidence type="ECO:0000305" key="5">
    <source>
    </source>
</evidence>
<feature type="chain" id="PRO_0000206304" description="Vacuolar protein sorting-associated protein 33A">
    <location>
        <begin position="1"/>
        <end position="597"/>
    </location>
</feature>
<comment type="function">
    <text evidence="1">Plays a role in vesicle-mediated protein trafficking to lysosomal compartments including the endocytic membrane transport and autophagic pathways. Believed to act as a core component of the putative HOPS and CORVET endosomal tethering complexes which are proposed to be involved in the Rab5-to-Rab7 endosome conversion probably implicating MON1A/B, and via binding SNAREs and SNARE complexes to mediate tethering and docking events during SNARE-mediated membrane fusion. The HOPS complex is proposed to be recruited to Rab7 on the late endosomal membrane and to regulate late endocytic, phagocytic and autophagic traffic towards lysosomes. The CORVET complex is proposed to function as a Rab5 effector to mediate early endosome fusion probably in specific endosome subpopulations. Required for fusion of endosomes and autophagosomes with lysosomes; the function is dependent on its association with VPS16 but not VIPAS39. The function in autophagosome-lysosome fusion implicates STX17 but not UVRAG.</text>
</comment>
<comment type="subunit">
    <text evidence="1 2 5">Core component of at least two putative endosomal tethering complexes, the homotypic fusion and vacuole protein sorting (HOPS) complex and the class C core vacuole/endosome tethering (CORVET) complex. Their common core is composed of the class C Vps proteins VPS11, VPS16, VPS18 and VPS33A, which in HOPS further associates with VPS39 and VPS41 and in CORVET with VPS8 and TGFBRAP1 (PubMed:11382755). Interacts with RAB5C, UVRAG, STX17, MON1A and MON1B. Associates with adaptor protein complex 3 (AP-3) and clathrin (By similarity). Interacts with PLEKHM1 (By similarity).</text>
</comment>
<comment type="interaction">
    <interactant intactId="EBI-918669">
        <id>Q63615</id>
    </interactant>
    <interactant intactId="EBI-373380">
        <id>Q9H270</id>
        <label>VPS11</label>
    </interactant>
    <organismsDiffer>true</organismsDiffer>
    <experiments>4</experiments>
</comment>
<comment type="interaction">
    <interactant intactId="EBI-918669">
        <id>Q63615</id>
    </interactant>
    <interactant intactId="EBI-1053363">
        <id>Q9P253</id>
        <label>VPS18</label>
    </interactant>
    <organismsDiffer>true</organismsDiffer>
    <experiments>2</experiments>
</comment>
<comment type="subcellular location">
    <subcellularLocation>
        <location evidence="3">Cytoplasmic vesicle</location>
    </subcellularLocation>
    <subcellularLocation>
        <location evidence="4">Late endosome membrane</location>
        <topology evidence="4">Peripheral membrane protein</topology>
        <orientation evidence="4">Cytoplasmic side</orientation>
    </subcellularLocation>
    <subcellularLocation>
        <location evidence="4">Lysosome membrane</location>
        <topology evidence="4">Peripheral membrane protein</topology>
        <orientation evidence="4">Cytoplasmic side</orientation>
    </subcellularLocation>
    <subcellularLocation>
        <location evidence="4">Early endosome</location>
    </subcellularLocation>
    <subcellularLocation>
        <location evidence="1">Cytoplasmic vesicle</location>
        <location evidence="1">Autophagosome</location>
    </subcellularLocation>
    <subcellularLocation>
        <location evidence="4">Cytoplasmic vesicle</location>
        <location evidence="4">Clathrin-coated vesicle</location>
    </subcellularLocation>
</comment>
<comment type="tissue specificity">
    <text>Ubiquitous.</text>
</comment>
<comment type="similarity">
    <text evidence="4">Belongs to the STXBP/unc-18/SEC1 family.</text>
</comment>
<dbReference type="EMBL" id="U35244">
    <property type="protein sequence ID" value="AAC52985.1"/>
    <property type="molecule type" value="mRNA"/>
</dbReference>
<dbReference type="PIR" id="JC5720">
    <property type="entry name" value="JC5720"/>
</dbReference>
<dbReference type="SMR" id="Q63615"/>
<dbReference type="CORUM" id="Q63615"/>
<dbReference type="FunCoup" id="Q63615">
    <property type="interactions" value="3671"/>
</dbReference>
<dbReference type="IntAct" id="Q63615">
    <property type="interactions" value="5"/>
</dbReference>
<dbReference type="STRING" id="10116.ENSRNOP00000073489"/>
<dbReference type="PhosphoSitePlus" id="Q63615"/>
<dbReference type="jPOST" id="Q63615"/>
<dbReference type="PaxDb" id="10116-ENSRNOP00000059816"/>
<dbReference type="UCSC" id="RGD:620643">
    <property type="organism name" value="rat"/>
</dbReference>
<dbReference type="AGR" id="RGD:620643"/>
<dbReference type="RGD" id="620643">
    <property type="gene designation" value="Vps33a"/>
</dbReference>
<dbReference type="eggNOG" id="KOG1302">
    <property type="taxonomic scope" value="Eukaryota"/>
</dbReference>
<dbReference type="InParanoid" id="Q63615"/>
<dbReference type="OrthoDB" id="10262287at2759"/>
<dbReference type="PhylomeDB" id="Q63615"/>
<dbReference type="PRO" id="PR:Q63615"/>
<dbReference type="Proteomes" id="UP000002494">
    <property type="component" value="Unplaced"/>
</dbReference>
<dbReference type="GO" id="GO:0030123">
    <property type="term" value="C:AP-3 adaptor complex"/>
    <property type="evidence" value="ECO:0000266"/>
    <property type="project" value="RGD"/>
</dbReference>
<dbReference type="GO" id="GO:0005776">
    <property type="term" value="C:autophagosome"/>
    <property type="evidence" value="ECO:0000250"/>
    <property type="project" value="UniProtKB"/>
</dbReference>
<dbReference type="GO" id="GO:0071439">
    <property type="term" value="C:clathrin complex"/>
    <property type="evidence" value="ECO:0000266"/>
    <property type="project" value="RGD"/>
</dbReference>
<dbReference type="GO" id="GO:0030136">
    <property type="term" value="C:clathrin-coated vesicle"/>
    <property type="evidence" value="ECO:0007669"/>
    <property type="project" value="UniProtKB-SubCell"/>
</dbReference>
<dbReference type="GO" id="GO:0033263">
    <property type="term" value="C:CORVET complex"/>
    <property type="evidence" value="ECO:0000266"/>
    <property type="project" value="RGD"/>
</dbReference>
<dbReference type="GO" id="GO:0005769">
    <property type="term" value="C:early endosome"/>
    <property type="evidence" value="ECO:0000266"/>
    <property type="project" value="RGD"/>
</dbReference>
<dbReference type="GO" id="GO:0030897">
    <property type="term" value="C:HOPS complex"/>
    <property type="evidence" value="ECO:0000266"/>
    <property type="project" value="RGD"/>
</dbReference>
<dbReference type="GO" id="GO:0005770">
    <property type="term" value="C:late endosome"/>
    <property type="evidence" value="ECO:0000266"/>
    <property type="project" value="RGD"/>
</dbReference>
<dbReference type="GO" id="GO:0031902">
    <property type="term" value="C:late endosome membrane"/>
    <property type="evidence" value="ECO:0007669"/>
    <property type="project" value="UniProtKB-SubCell"/>
</dbReference>
<dbReference type="GO" id="GO:0005765">
    <property type="term" value="C:lysosomal membrane"/>
    <property type="evidence" value="ECO:0007669"/>
    <property type="project" value="UniProtKB-SubCell"/>
</dbReference>
<dbReference type="GO" id="GO:0005764">
    <property type="term" value="C:lysosome"/>
    <property type="evidence" value="ECO:0000250"/>
    <property type="project" value="UniProtKB"/>
</dbReference>
<dbReference type="GO" id="GO:0048471">
    <property type="term" value="C:perinuclear region of cytoplasm"/>
    <property type="evidence" value="ECO:0000266"/>
    <property type="project" value="RGD"/>
</dbReference>
<dbReference type="GO" id="GO:0044877">
    <property type="term" value="F:protein-containing complex binding"/>
    <property type="evidence" value="ECO:0000353"/>
    <property type="project" value="RGD"/>
</dbReference>
<dbReference type="GO" id="GO:0097352">
    <property type="term" value="P:autophagosome maturation"/>
    <property type="evidence" value="ECO:0000266"/>
    <property type="project" value="RGD"/>
</dbReference>
<dbReference type="GO" id="GO:0008333">
    <property type="term" value="P:endosome to lysosome transport"/>
    <property type="evidence" value="ECO:0000266"/>
    <property type="project" value="RGD"/>
</dbReference>
<dbReference type="GO" id="GO:0006886">
    <property type="term" value="P:intracellular protein transport"/>
    <property type="evidence" value="ECO:0000318"/>
    <property type="project" value="GO_Central"/>
</dbReference>
<dbReference type="GO" id="GO:0032418">
    <property type="term" value="P:lysosome localization"/>
    <property type="evidence" value="ECO:0000266"/>
    <property type="project" value="RGD"/>
</dbReference>
<dbReference type="GO" id="GO:0032400">
    <property type="term" value="P:melanosome localization"/>
    <property type="evidence" value="ECO:0000266"/>
    <property type="project" value="RGD"/>
</dbReference>
<dbReference type="GO" id="GO:0043473">
    <property type="term" value="P:pigmentation"/>
    <property type="evidence" value="ECO:0000266"/>
    <property type="project" value="RGD"/>
</dbReference>
<dbReference type="GO" id="GO:0030220">
    <property type="term" value="P:platelet formation"/>
    <property type="evidence" value="ECO:0000266"/>
    <property type="project" value="RGD"/>
</dbReference>
<dbReference type="GO" id="GO:0048070">
    <property type="term" value="P:regulation of developmental pigmentation"/>
    <property type="evidence" value="ECO:0000266"/>
    <property type="project" value="RGD"/>
</dbReference>
<dbReference type="GO" id="GO:0035751">
    <property type="term" value="P:regulation of lysosomal lumen pH"/>
    <property type="evidence" value="ECO:0000250"/>
    <property type="project" value="UniProtKB"/>
</dbReference>
<dbReference type="GO" id="GO:0016192">
    <property type="term" value="P:vesicle-mediated transport"/>
    <property type="evidence" value="ECO:0000266"/>
    <property type="project" value="RGD"/>
</dbReference>
<dbReference type="FunFam" id="1.25.40.850:FF:000002">
    <property type="entry name" value="Vacuolar protein sorting-associated protein 33A"/>
    <property type="match status" value="1"/>
</dbReference>
<dbReference type="FunFam" id="3.90.830.10:FF:000006">
    <property type="entry name" value="Vacuolar protein sorting-associated protein 33A"/>
    <property type="match status" value="1"/>
</dbReference>
<dbReference type="FunFam" id="3.40.50.1910:FF:000005">
    <property type="entry name" value="vacuolar protein sorting-associated protein 33A isoform X1"/>
    <property type="match status" value="1"/>
</dbReference>
<dbReference type="FunFam" id="3.40.50.1910:FF:000008">
    <property type="entry name" value="vacuolar protein sorting-associated protein 33A isoform X2"/>
    <property type="match status" value="1"/>
</dbReference>
<dbReference type="FunFam" id="3.40.50.2060:FF:000004">
    <property type="entry name" value="vacuolar protein sorting-associated protein 33A isoform X2"/>
    <property type="match status" value="1"/>
</dbReference>
<dbReference type="Gene3D" id="1.25.40.850">
    <property type="match status" value="1"/>
</dbReference>
<dbReference type="Gene3D" id="3.40.50.1910">
    <property type="match status" value="3"/>
</dbReference>
<dbReference type="Gene3D" id="3.40.50.2060">
    <property type="match status" value="1"/>
</dbReference>
<dbReference type="InterPro" id="IPR043154">
    <property type="entry name" value="Sec-1-like_dom1"/>
</dbReference>
<dbReference type="InterPro" id="IPR001619">
    <property type="entry name" value="Sec1-like"/>
</dbReference>
<dbReference type="InterPro" id="IPR027482">
    <property type="entry name" value="Sec1-like_dom2"/>
</dbReference>
<dbReference type="InterPro" id="IPR036045">
    <property type="entry name" value="Sec1-like_sf"/>
</dbReference>
<dbReference type="InterPro" id="IPR043155">
    <property type="entry name" value="VPS33_dom3b"/>
</dbReference>
<dbReference type="PANTHER" id="PTHR11679">
    <property type="entry name" value="VESICLE PROTEIN SORTING-ASSOCIATED"/>
    <property type="match status" value="1"/>
</dbReference>
<dbReference type="Pfam" id="PF00995">
    <property type="entry name" value="Sec1"/>
    <property type="match status" value="1"/>
</dbReference>
<dbReference type="SUPFAM" id="SSF56815">
    <property type="entry name" value="Sec1/munc18-like (SM) proteins"/>
    <property type="match status" value="1"/>
</dbReference>
<protein>
    <recommendedName>
        <fullName>Vacuolar protein sorting-associated protein 33A</fullName>
        <shortName>r-vps33a</shortName>
    </recommendedName>
</protein>